<sequence>MFNQVKKTMEWGEDTLTLETGKIARQADGCVIATYGETSVMAAVTYARSQKPGQDFFPLTVHYNEKYYAAGKIPGGFFKREARPTEKETLTSRLIDRPIRPLFVDGFKNEVLVICTVLSHDLENDPDIVAMIAASAALTISGVPFMGPIAGARVGYEDGEYVLNPVVDDMHDLRNNPDQRLDLVVAGTKDAVMMVESEAYELSEAEMLGAVKFGHEQMQPVIDLIIELAETAAKEPFDFQPADYSELYAKVKAAGEDQMRAAFAITDKQERVTAISAARDAILATLSDEEQTDPNLGSALKKLESSILRGDVVKNGRRIDGRALDTVRPIQSEVGILPRTHGSALFTRGETQGLVVTTLGTGDDEQFIDALHGNFKSNFLLHYNFPPYSVGEVGRFGPPGRREIGHGKLAWRALQAVLPAATDFPYTIRLVSEITESNGSSSMASVCGGSLSMMDAGVPLKAPVAGVAMGLILEEDGSYAVLTDILGDEDHLGDMDFKVAGTEEGITSLQMDIKVAGITPEIMEKALEQAKAGRLHILGEMSKALSEGRSQFSEHAPRIETMQIPTDKIREVIGSGGKVIREIVETSGAKVDINDDGIIKIASANGEAIKKAYEMIHSIVAEPEEGKVYTGTVVKIVDFGAFVNFFGKRDGLVHVSQIENRRLNHPSDVLKEGQEVKVKLLGFDDRGKVRLSMKVVDQETGEEIKKEAPAD</sequence>
<protein>
    <recommendedName>
        <fullName evidence="1">Polyribonucleotide nucleotidyltransferase</fullName>
        <ecNumber evidence="1">2.7.7.8</ecNumber>
    </recommendedName>
    <alternativeName>
        <fullName evidence="1">Polynucleotide phosphorylase</fullName>
        <shortName evidence="1">PNPase</shortName>
    </alternativeName>
</protein>
<dbReference type="EC" id="2.7.7.8" evidence="1"/>
<dbReference type="EMBL" id="CP000830">
    <property type="protein sequence ID" value="ABV94730.1"/>
    <property type="molecule type" value="Genomic_DNA"/>
</dbReference>
<dbReference type="RefSeq" id="WP_012179658.1">
    <property type="nucleotide sequence ID" value="NC_009952.1"/>
</dbReference>
<dbReference type="SMR" id="A8LKE7"/>
<dbReference type="STRING" id="398580.Dshi_2997"/>
<dbReference type="KEGG" id="dsh:Dshi_2997"/>
<dbReference type="eggNOG" id="COG1185">
    <property type="taxonomic scope" value="Bacteria"/>
</dbReference>
<dbReference type="HOGENOM" id="CLU_004217_2_2_5"/>
<dbReference type="OrthoDB" id="9804305at2"/>
<dbReference type="Proteomes" id="UP000006833">
    <property type="component" value="Chromosome"/>
</dbReference>
<dbReference type="GO" id="GO:0005829">
    <property type="term" value="C:cytosol"/>
    <property type="evidence" value="ECO:0007669"/>
    <property type="project" value="TreeGrafter"/>
</dbReference>
<dbReference type="GO" id="GO:0000175">
    <property type="term" value="F:3'-5'-RNA exonuclease activity"/>
    <property type="evidence" value="ECO:0007669"/>
    <property type="project" value="TreeGrafter"/>
</dbReference>
<dbReference type="GO" id="GO:0000287">
    <property type="term" value="F:magnesium ion binding"/>
    <property type="evidence" value="ECO:0007669"/>
    <property type="project" value="UniProtKB-UniRule"/>
</dbReference>
<dbReference type="GO" id="GO:0004654">
    <property type="term" value="F:polyribonucleotide nucleotidyltransferase activity"/>
    <property type="evidence" value="ECO:0007669"/>
    <property type="project" value="UniProtKB-UniRule"/>
</dbReference>
<dbReference type="GO" id="GO:0003723">
    <property type="term" value="F:RNA binding"/>
    <property type="evidence" value="ECO:0007669"/>
    <property type="project" value="UniProtKB-UniRule"/>
</dbReference>
<dbReference type="GO" id="GO:0006402">
    <property type="term" value="P:mRNA catabolic process"/>
    <property type="evidence" value="ECO:0007669"/>
    <property type="project" value="UniProtKB-UniRule"/>
</dbReference>
<dbReference type="GO" id="GO:0006396">
    <property type="term" value="P:RNA processing"/>
    <property type="evidence" value="ECO:0007669"/>
    <property type="project" value="InterPro"/>
</dbReference>
<dbReference type="CDD" id="cd02393">
    <property type="entry name" value="KH-I_PNPase"/>
    <property type="match status" value="1"/>
</dbReference>
<dbReference type="CDD" id="cd11363">
    <property type="entry name" value="RNase_PH_PNPase_1"/>
    <property type="match status" value="1"/>
</dbReference>
<dbReference type="CDD" id="cd11364">
    <property type="entry name" value="RNase_PH_PNPase_2"/>
    <property type="match status" value="1"/>
</dbReference>
<dbReference type="CDD" id="cd04472">
    <property type="entry name" value="S1_PNPase"/>
    <property type="match status" value="1"/>
</dbReference>
<dbReference type="FunFam" id="2.40.50.140:FF:000107">
    <property type="entry name" value="Polyribonucleotide nucleotidyltransferase"/>
    <property type="match status" value="1"/>
</dbReference>
<dbReference type="FunFam" id="3.30.1370.10:FF:000001">
    <property type="entry name" value="Polyribonucleotide nucleotidyltransferase"/>
    <property type="match status" value="1"/>
</dbReference>
<dbReference type="FunFam" id="3.30.230.70:FF:000001">
    <property type="entry name" value="Polyribonucleotide nucleotidyltransferase"/>
    <property type="match status" value="1"/>
</dbReference>
<dbReference type="FunFam" id="3.30.230.70:FF:000002">
    <property type="entry name" value="Polyribonucleotide nucleotidyltransferase"/>
    <property type="match status" value="1"/>
</dbReference>
<dbReference type="Gene3D" id="3.30.230.70">
    <property type="entry name" value="GHMP Kinase, N-terminal domain"/>
    <property type="match status" value="2"/>
</dbReference>
<dbReference type="Gene3D" id="3.30.1370.10">
    <property type="entry name" value="K Homology domain, type 1"/>
    <property type="match status" value="1"/>
</dbReference>
<dbReference type="Gene3D" id="2.40.50.140">
    <property type="entry name" value="Nucleic acid-binding proteins"/>
    <property type="match status" value="1"/>
</dbReference>
<dbReference type="HAMAP" id="MF_01595">
    <property type="entry name" value="PNPase"/>
    <property type="match status" value="1"/>
</dbReference>
<dbReference type="InterPro" id="IPR001247">
    <property type="entry name" value="ExoRNase_PH_dom1"/>
</dbReference>
<dbReference type="InterPro" id="IPR015847">
    <property type="entry name" value="ExoRNase_PH_dom2"/>
</dbReference>
<dbReference type="InterPro" id="IPR036345">
    <property type="entry name" value="ExoRNase_PH_dom2_sf"/>
</dbReference>
<dbReference type="InterPro" id="IPR004087">
    <property type="entry name" value="KH_dom"/>
</dbReference>
<dbReference type="InterPro" id="IPR004088">
    <property type="entry name" value="KH_dom_type_1"/>
</dbReference>
<dbReference type="InterPro" id="IPR036612">
    <property type="entry name" value="KH_dom_type_1_sf"/>
</dbReference>
<dbReference type="InterPro" id="IPR012340">
    <property type="entry name" value="NA-bd_OB-fold"/>
</dbReference>
<dbReference type="InterPro" id="IPR012162">
    <property type="entry name" value="PNPase"/>
</dbReference>
<dbReference type="InterPro" id="IPR027408">
    <property type="entry name" value="PNPase/RNase_PH_dom_sf"/>
</dbReference>
<dbReference type="InterPro" id="IPR015848">
    <property type="entry name" value="PNPase_PH_RNA-bd_bac/org-type"/>
</dbReference>
<dbReference type="InterPro" id="IPR036456">
    <property type="entry name" value="PNPase_PH_RNA-bd_sf"/>
</dbReference>
<dbReference type="InterPro" id="IPR020568">
    <property type="entry name" value="Ribosomal_Su5_D2-typ_SF"/>
</dbReference>
<dbReference type="InterPro" id="IPR003029">
    <property type="entry name" value="S1_domain"/>
</dbReference>
<dbReference type="NCBIfam" id="TIGR03591">
    <property type="entry name" value="polynuc_phos"/>
    <property type="match status" value="1"/>
</dbReference>
<dbReference type="NCBIfam" id="NF008805">
    <property type="entry name" value="PRK11824.1"/>
    <property type="match status" value="1"/>
</dbReference>
<dbReference type="PANTHER" id="PTHR11252">
    <property type="entry name" value="POLYRIBONUCLEOTIDE NUCLEOTIDYLTRANSFERASE"/>
    <property type="match status" value="1"/>
</dbReference>
<dbReference type="PANTHER" id="PTHR11252:SF0">
    <property type="entry name" value="POLYRIBONUCLEOTIDE NUCLEOTIDYLTRANSFERASE 1, MITOCHONDRIAL"/>
    <property type="match status" value="1"/>
</dbReference>
<dbReference type="Pfam" id="PF00013">
    <property type="entry name" value="KH_1"/>
    <property type="match status" value="1"/>
</dbReference>
<dbReference type="Pfam" id="PF03726">
    <property type="entry name" value="PNPase"/>
    <property type="match status" value="1"/>
</dbReference>
<dbReference type="Pfam" id="PF01138">
    <property type="entry name" value="RNase_PH"/>
    <property type="match status" value="2"/>
</dbReference>
<dbReference type="Pfam" id="PF03725">
    <property type="entry name" value="RNase_PH_C"/>
    <property type="match status" value="2"/>
</dbReference>
<dbReference type="Pfam" id="PF00575">
    <property type="entry name" value="S1"/>
    <property type="match status" value="1"/>
</dbReference>
<dbReference type="PIRSF" id="PIRSF005499">
    <property type="entry name" value="PNPase"/>
    <property type="match status" value="1"/>
</dbReference>
<dbReference type="SMART" id="SM00322">
    <property type="entry name" value="KH"/>
    <property type="match status" value="1"/>
</dbReference>
<dbReference type="SMART" id="SM00316">
    <property type="entry name" value="S1"/>
    <property type="match status" value="1"/>
</dbReference>
<dbReference type="SUPFAM" id="SSF54791">
    <property type="entry name" value="Eukaryotic type KH-domain (KH-domain type I)"/>
    <property type="match status" value="1"/>
</dbReference>
<dbReference type="SUPFAM" id="SSF50249">
    <property type="entry name" value="Nucleic acid-binding proteins"/>
    <property type="match status" value="1"/>
</dbReference>
<dbReference type="SUPFAM" id="SSF46915">
    <property type="entry name" value="Polynucleotide phosphorylase/guanosine pentaphosphate synthase (PNPase/GPSI), domain 3"/>
    <property type="match status" value="1"/>
</dbReference>
<dbReference type="SUPFAM" id="SSF55666">
    <property type="entry name" value="Ribonuclease PH domain 2-like"/>
    <property type="match status" value="2"/>
</dbReference>
<dbReference type="SUPFAM" id="SSF54211">
    <property type="entry name" value="Ribosomal protein S5 domain 2-like"/>
    <property type="match status" value="2"/>
</dbReference>
<dbReference type="PROSITE" id="PS50084">
    <property type="entry name" value="KH_TYPE_1"/>
    <property type="match status" value="1"/>
</dbReference>
<dbReference type="PROSITE" id="PS50126">
    <property type="entry name" value="S1"/>
    <property type="match status" value="1"/>
</dbReference>
<comment type="function">
    <text evidence="1">Involved in mRNA degradation. Catalyzes the phosphorolysis of single-stranded polyribonucleotides processively in the 3'- to 5'-direction.</text>
</comment>
<comment type="catalytic activity">
    <reaction evidence="1">
        <text>RNA(n+1) + phosphate = RNA(n) + a ribonucleoside 5'-diphosphate</text>
        <dbReference type="Rhea" id="RHEA:22096"/>
        <dbReference type="Rhea" id="RHEA-COMP:14527"/>
        <dbReference type="Rhea" id="RHEA-COMP:17342"/>
        <dbReference type="ChEBI" id="CHEBI:43474"/>
        <dbReference type="ChEBI" id="CHEBI:57930"/>
        <dbReference type="ChEBI" id="CHEBI:140395"/>
        <dbReference type="EC" id="2.7.7.8"/>
    </reaction>
</comment>
<comment type="cofactor">
    <cofactor evidence="1">
        <name>Mg(2+)</name>
        <dbReference type="ChEBI" id="CHEBI:18420"/>
    </cofactor>
</comment>
<comment type="subcellular location">
    <subcellularLocation>
        <location evidence="1">Cytoplasm</location>
    </subcellularLocation>
</comment>
<comment type="similarity">
    <text evidence="1">Belongs to the polyribonucleotide nucleotidyltransferase family.</text>
</comment>
<feature type="chain" id="PRO_0000329629" description="Polyribonucleotide nucleotidyltransferase">
    <location>
        <begin position="1"/>
        <end position="711"/>
    </location>
</feature>
<feature type="domain" description="KH" evidence="1">
    <location>
        <begin position="557"/>
        <end position="616"/>
    </location>
</feature>
<feature type="domain" description="S1 motif" evidence="1">
    <location>
        <begin position="626"/>
        <end position="694"/>
    </location>
</feature>
<feature type="binding site" evidence="1">
    <location>
        <position position="490"/>
    </location>
    <ligand>
        <name>Mg(2+)</name>
        <dbReference type="ChEBI" id="CHEBI:18420"/>
    </ligand>
</feature>
<feature type="binding site" evidence="1">
    <location>
        <position position="496"/>
    </location>
    <ligand>
        <name>Mg(2+)</name>
        <dbReference type="ChEBI" id="CHEBI:18420"/>
    </ligand>
</feature>
<organism>
    <name type="scientific">Dinoroseobacter shibae (strain DSM 16493 / NCIMB 14021 / DFL 12)</name>
    <dbReference type="NCBI Taxonomy" id="398580"/>
    <lineage>
        <taxon>Bacteria</taxon>
        <taxon>Pseudomonadati</taxon>
        <taxon>Pseudomonadota</taxon>
        <taxon>Alphaproteobacteria</taxon>
        <taxon>Rhodobacterales</taxon>
        <taxon>Roseobacteraceae</taxon>
        <taxon>Dinoroseobacter</taxon>
    </lineage>
</organism>
<reference key="1">
    <citation type="journal article" date="2010" name="ISME J.">
        <title>The complete genome sequence of the algal symbiont Dinoroseobacter shibae: a hitchhiker's guide to life in the sea.</title>
        <authorList>
            <person name="Wagner-Dobler I."/>
            <person name="Ballhausen B."/>
            <person name="Berger M."/>
            <person name="Brinkhoff T."/>
            <person name="Buchholz I."/>
            <person name="Bunk B."/>
            <person name="Cypionka H."/>
            <person name="Daniel R."/>
            <person name="Drepper T."/>
            <person name="Gerdts G."/>
            <person name="Hahnke S."/>
            <person name="Han C."/>
            <person name="Jahn D."/>
            <person name="Kalhoefer D."/>
            <person name="Kiss H."/>
            <person name="Klenk H.P."/>
            <person name="Kyrpides N."/>
            <person name="Liebl W."/>
            <person name="Liesegang H."/>
            <person name="Meincke L."/>
            <person name="Pati A."/>
            <person name="Petersen J."/>
            <person name="Piekarski T."/>
            <person name="Pommerenke C."/>
            <person name="Pradella S."/>
            <person name="Pukall R."/>
            <person name="Rabus R."/>
            <person name="Stackebrandt E."/>
            <person name="Thole S."/>
            <person name="Thompson L."/>
            <person name="Tielen P."/>
            <person name="Tomasch J."/>
            <person name="von Jan M."/>
            <person name="Wanphrut N."/>
            <person name="Wichels A."/>
            <person name="Zech H."/>
            <person name="Simon M."/>
        </authorList>
    </citation>
    <scope>NUCLEOTIDE SEQUENCE [LARGE SCALE GENOMIC DNA]</scope>
    <source>
        <strain>DSM 16493 / NCIMB 14021 / DFL 12</strain>
    </source>
</reference>
<accession>A8LKE7</accession>
<proteinExistence type="inferred from homology"/>
<evidence type="ECO:0000255" key="1">
    <source>
        <dbReference type="HAMAP-Rule" id="MF_01595"/>
    </source>
</evidence>
<name>PNP_DINSH</name>
<keyword id="KW-0963">Cytoplasm</keyword>
<keyword id="KW-0460">Magnesium</keyword>
<keyword id="KW-0479">Metal-binding</keyword>
<keyword id="KW-0548">Nucleotidyltransferase</keyword>
<keyword id="KW-1185">Reference proteome</keyword>
<keyword id="KW-0694">RNA-binding</keyword>
<keyword id="KW-0808">Transferase</keyword>
<gene>
    <name evidence="1" type="primary">pnp</name>
    <name type="ordered locus">Dshi_2997</name>
</gene>